<accession>Q325S4</accession>
<feature type="chain" id="PRO_1000009096" description="Phosphoheptose isomerase">
    <location>
        <begin position="1"/>
        <end position="192"/>
    </location>
</feature>
<feature type="domain" description="SIS" evidence="1">
    <location>
        <begin position="37"/>
        <end position="192"/>
    </location>
</feature>
<feature type="binding site" evidence="1">
    <location>
        <begin position="52"/>
        <end position="54"/>
    </location>
    <ligand>
        <name>substrate</name>
    </ligand>
</feature>
<feature type="binding site" evidence="1">
    <location>
        <position position="61"/>
    </location>
    <ligand>
        <name>Zn(2+)</name>
        <dbReference type="ChEBI" id="CHEBI:29105"/>
    </ligand>
</feature>
<feature type="binding site" evidence="1">
    <location>
        <position position="65"/>
    </location>
    <ligand>
        <name>substrate</name>
    </ligand>
</feature>
<feature type="binding site" evidence="1">
    <location>
        <position position="65"/>
    </location>
    <ligand>
        <name>Zn(2+)</name>
        <dbReference type="ChEBI" id="CHEBI:29105"/>
    </ligand>
</feature>
<feature type="binding site" evidence="1">
    <location>
        <begin position="93"/>
        <end position="94"/>
    </location>
    <ligand>
        <name>substrate</name>
    </ligand>
</feature>
<feature type="binding site" evidence="1">
    <location>
        <begin position="119"/>
        <end position="121"/>
    </location>
    <ligand>
        <name>substrate</name>
    </ligand>
</feature>
<feature type="binding site" evidence="1">
    <location>
        <position position="124"/>
    </location>
    <ligand>
        <name>substrate</name>
    </ligand>
</feature>
<feature type="binding site" evidence="1">
    <location>
        <position position="172"/>
    </location>
    <ligand>
        <name>substrate</name>
    </ligand>
</feature>
<feature type="binding site" evidence="1">
    <location>
        <position position="172"/>
    </location>
    <ligand>
        <name>Zn(2+)</name>
        <dbReference type="ChEBI" id="CHEBI:29105"/>
    </ligand>
</feature>
<feature type="binding site" evidence="1">
    <location>
        <position position="180"/>
    </location>
    <ligand>
        <name>Zn(2+)</name>
        <dbReference type="ChEBI" id="CHEBI:29105"/>
    </ligand>
</feature>
<organism>
    <name type="scientific">Shigella boydii serotype 4 (strain Sb227)</name>
    <dbReference type="NCBI Taxonomy" id="300268"/>
    <lineage>
        <taxon>Bacteria</taxon>
        <taxon>Pseudomonadati</taxon>
        <taxon>Pseudomonadota</taxon>
        <taxon>Gammaproteobacteria</taxon>
        <taxon>Enterobacterales</taxon>
        <taxon>Enterobacteriaceae</taxon>
        <taxon>Shigella</taxon>
    </lineage>
</organism>
<comment type="function">
    <text evidence="1">Catalyzes the isomerization of sedoheptulose 7-phosphate in D-glycero-D-manno-heptose 7-phosphate.</text>
</comment>
<comment type="catalytic activity">
    <reaction evidence="1">
        <text>2 D-sedoheptulose 7-phosphate = D-glycero-alpha-D-manno-heptose 7-phosphate + D-glycero-beta-D-manno-heptose 7-phosphate</text>
        <dbReference type="Rhea" id="RHEA:27489"/>
        <dbReference type="ChEBI" id="CHEBI:57483"/>
        <dbReference type="ChEBI" id="CHEBI:60203"/>
        <dbReference type="ChEBI" id="CHEBI:60204"/>
        <dbReference type="EC" id="5.3.1.28"/>
    </reaction>
</comment>
<comment type="cofactor">
    <cofactor evidence="1">
        <name>Zn(2+)</name>
        <dbReference type="ChEBI" id="CHEBI:29105"/>
    </cofactor>
    <text evidence="1">Binds 1 zinc ion per subunit.</text>
</comment>
<comment type="pathway">
    <text evidence="1">Carbohydrate biosynthesis; D-glycero-D-manno-heptose 7-phosphate biosynthesis; D-glycero-alpha-D-manno-heptose 7-phosphate and D-glycero-beta-D-manno-heptose 7-phosphate from sedoheptulose 7-phosphate: step 1/1.</text>
</comment>
<comment type="subunit">
    <text evidence="1">Homotetramer.</text>
</comment>
<comment type="subcellular location">
    <subcellularLocation>
        <location evidence="1">Cytoplasm</location>
    </subcellularLocation>
</comment>
<comment type="miscellaneous">
    <text evidence="1">The reaction produces a racemic mixture of D-glycero-alpha-D-manno-heptose 7-phosphate and D-glycero-beta-D-manno-heptose 7-phosphate.</text>
</comment>
<comment type="similarity">
    <text evidence="1">Belongs to the SIS family. GmhA subfamily.</text>
</comment>
<keyword id="KW-0119">Carbohydrate metabolism</keyword>
<keyword id="KW-0963">Cytoplasm</keyword>
<keyword id="KW-0413">Isomerase</keyword>
<keyword id="KW-0479">Metal-binding</keyword>
<keyword id="KW-0862">Zinc</keyword>
<gene>
    <name evidence="1" type="primary">gmhA</name>
    <name type="ordered locus">SBO_0213</name>
</gene>
<reference key="1">
    <citation type="journal article" date="2005" name="Nucleic Acids Res.">
        <title>Genome dynamics and diversity of Shigella species, the etiologic agents of bacillary dysentery.</title>
        <authorList>
            <person name="Yang F."/>
            <person name="Yang J."/>
            <person name="Zhang X."/>
            <person name="Chen L."/>
            <person name="Jiang Y."/>
            <person name="Yan Y."/>
            <person name="Tang X."/>
            <person name="Wang J."/>
            <person name="Xiong Z."/>
            <person name="Dong J."/>
            <person name="Xue Y."/>
            <person name="Zhu Y."/>
            <person name="Xu X."/>
            <person name="Sun L."/>
            <person name="Chen S."/>
            <person name="Nie H."/>
            <person name="Peng J."/>
            <person name="Xu J."/>
            <person name="Wang Y."/>
            <person name="Yuan Z."/>
            <person name="Wen Y."/>
            <person name="Yao Z."/>
            <person name="Shen Y."/>
            <person name="Qiang B."/>
            <person name="Hou Y."/>
            <person name="Yu J."/>
            <person name="Jin Q."/>
        </authorList>
    </citation>
    <scope>NUCLEOTIDE SEQUENCE [LARGE SCALE GENOMIC DNA]</scope>
    <source>
        <strain>Sb227</strain>
    </source>
</reference>
<evidence type="ECO:0000255" key="1">
    <source>
        <dbReference type="HAMAP-Rule" id="MF_00067"/>
    </source>
</evidence>
<name>GMHA_SHIBS</name>
<protein>
    <recommendedName>
        <fullName evidence="1">Phosphoheptose isomerase</fullName>
        <ecNumber evidence="1">5.3.1.28</ecNumber>
    </recommendedName>
    <alternativeName>
        <fullName evidence="1">Sedoheptulose 7-phosphate isomerase</fullName>
    </alternativeName>
</protein>
<proteinExistence type="inferred from homology"/>
<sequence>MYQDLIRNELNEAAETLANFLKDDANIHAIQRAAVLLADSFKAGGKVLSCGNGGSHCDAMHFAEELTGRYRENRPGYPAIAISDVSHISCVGNDFGFNDIFSRYVEAVGREGDVLLGISTSGNSANVIKAIAAAREKGMKVITLTGKDGGKMAGTADIEIRVPHFGYADRIQEIHIKVIHILIQLIEKEMVK</sequence>
<dbReference type="EC" id="5.3.1.28" evidence="1"/>
<dbReference type="EMBL" id="CP000036">
    <property type="protein sequence ID" value="ABB64934.1"/>
    <property type="molecule type" value="Genomic_DNA"/>
</dbReference>
<dbReference type="SMR" id="Q325S4"/>
<dbReference type="KEGG" id="sbo:SBO_0213"/>
<dbReference type="HOGENOM" id="CLU_080999_4_0_6"/>
<dbReference type="UniPathway" id="UPA00041">
    <property type="reaction ID" value="UER00436"/>
</dbReference>
<dbReference type="Proteomes" id="UP000007067">
    <property type="component" value="Chromosome"/>
</dbReference>
<dbReference type="GO" id="GO:0005737">
    <property type="term" value="C:cytoplasm"/>
    <property type="evidence" value="ECO:0007669"/>
    <property type="project" value="UniProtKB-SubCell"/>
</dbReference>
<dbReference type="GO" id="GO:0097367">
    <property type="term" value="F:carbohydrate derivative binding"/>
    <property type="evidence" value="ECO:0007669"/>
    <property type="project" value="InterPro"/>
</dbReference>
<dbReference type="GO" id="GO:0008968">
    <property type="term" value="F:D-sedoheptulose 7-phosphate isomerase activity"/>
    <property type="evidence" value="ECO:0007669"/>
    <property type="project" value="UniProtKB-UniRule"/>
</dbReference>
<dbReference type="GO" id="GO:0008270">
    <property type="term" value="F:zinc ion binding"/>
    <property type="evidence" value="ECO:0007669"/>
    <property type="project" value="UniProtKB-UniRule"/>
</dbReference>
<dbReference type="GO" id="GO:0005975">
    <property type="term" value="P:carbohydrate metabolic process"/>
    <property type="evidence" value="ECO:0007669"/>
    <property type="project" value="UniProtKB-UniRule"/>
</dbReference>
<dbReference type="GO" id="GO:2001061">
    <property type="term" value="P:D-glycero-D-manno-heptose 7-phosphate biosynthetic process"/>
    <property type="evidence" value="ECO:0007669"/>
    <property type="project" value="UniProtKB-UniPathway"/>
</dbReference>
<dbReference type="CDD" id="cd05006">
    <property type="entry name" value="SIS_GmhA"/>
    <property type="match status" value="1"/>
</dbReference>
<dbReference type="FunFam" id="3.40.50.10490:FF:000013">
    <property type="entry name" value="Phosphoheptose isomerase"/>
    <property type="match status" value="1"/>
</dbReference>
<dbReference type="Gene3D" id="3.40.50.10490">
    <property type="entry name" value="Glucose-6-phosphate isomerase like protein, domain 1"/>
    <property type="match status" value="1"/>
</dbReference>
<dbReference type="HAMAP" id="MF_00067">
    <property type="entry name" value="GmhA"/>
    <property type="match status" value="1"/>
</dbReference>
<dbReference type="InterPro" id="IPR035461">
    <property type="entry name" value="GmhA/DiaA"/>
</dbReference>
<dbReference type="InterPro" id="IPR004515">
    <property type="entry name" value="Phosphoheptose_Isoase"/>
</dbReference>
<dbReference type="InterPro" id="IPR001347">
    <property type="entry name" value="SIS_dom"/>
</dbReference>
<dbReference type="InterPro" id="IPR046348">
    <property type="entry name" value="SIS_dom_sf"/>
</dbReference>
<dbReference type="InterPro" id="IPR050099">
    <property type="entry name" value="SIS_GmhA/DiaA_subfam"/>
</dbReference>
<dbReference type="NCBIfam" id="TIGR00441">
    <property type="entry name" value="gmhA"/>
    <property type="match status" value="1"/>
</dbReference>
<dbReference type="NCBIfam" id="NF001628">
    <property type="entry name" value="PRK00414.1"/>
    <property type="match status" value="1"/>
</dbReference>
<dbReference type="PANTHER" id="PTHR30390:SF7">
    <property type="entry name" value="PHOSPHOHEPTOSE ISOMERASE"/>
    <property type="match status" value="1"/>
</dbReference>
<dbReference type="PANTHER" id="PTHR30390">
    <property type="entry name" value="SEDOHEPTULOSE 7-PHOSPHATE ISOMERASE / DNAA INITIATOR-ASSOCIATING FACTOR FOR REPLICATION INITIATION"/>
    <property type="match status" value="1"/>
</dbReference>
<dbReference type="Pfam" id="PF13580">
    <property type="entry name" value="SIS_2"/>
    <property type="match status" value="1"/>
</dbReference>
<dbReference type="SUPFAM" id="SSF53697">
    <property type="entry name" value="SIS domain"/>
    <property type="match status" value="1"/>
</dbReference>
<dbReference type="PROSITE" id="PS51464">
    <property type="entry name" value="SIS"/>
    <property type="match status" value="1"/>
</dbReference>